<proteinExistence type="inferred from homology"/>
<protein>
    <recommendedName>
        <fullName evidence="1">Large ribosomal subunit protein bL9</fullName>
    </recommendedName>
    <alternativeName>
        <fullName evidence="3">50S ribosomal protein L9</fullName>
    </alternativeName>
</protein>
<keyword id="KW-1185">Reference proteome</keyword>
<keyword id="KW-0687">Ribonucleoprotein</keyword>
<keyword id="KW-0689">Ribosomal protein</keyword>
<keyword id="KW-0694">RNA-binding</keyword>
<keyword id="KW-0699">rRNA-binding</keyword>
<name>RL9_ALLAM</name>
<organism>
    <name type="scientific">Allorhizobium ampelinum (strain ATCC BAA-846 / DSM 112012 / S4)</name>
    <name type="common">Agrobacterium vitis (strain S4)</name>
    <dbReference type="NCBI Taxonomy" id="311402"/>
    <lineage>
        <taxon>Bacteria</taxon>
        <taxon>Pseudomonadati</taxon>
        <taxon>Pseudomonadota</taxon>
        <taxon>Alphaproteobacteria</taxon>
        <taxon>Hyphomicrobiales</taxon>
        <taxon>Rhizobiaceae</taxon>
        <taxon>Rhizobium/Agrobacterium group</taxon>
        <taxon>Allorhizobium</taxon>
        <taxon>Allorhizobium ampelinum</taxon>
    </lineage>
</organism>
<evidence type="ECO:0000255" key="1">
    <source>
        <dbReference type="HAMAP-Rule" id="MF_00503"/>
    </source>
</evidence>
<evidence type="ECO:0000256" key="2">
    <source>
        <dbReference type="SAM" id="MobiDB-lite"/>
    </source>
</evidence>
<evidence type="ECO:0000305" key="3"/>
<accession>B9JUT9</accession>
<gene>
    <name evidence="1" type="primary">rplI</name>
    <name type="ordered locus">Avi_1516</name>
</gene>
<sequence length="191" mass="20851">MQVILLERIAKLGQMGEVVKVRDGFARNYLLPTGKALRANAANKARFDAERSTLEARNLERKSEAQTVADVLNGKSFIVVRSAGETGQLYGSVAARDIIEALAAEGFTVSRNQVELNNPIKTIGLHNVTMHLHAEVEIAIEINVARSAEEAERQAKGESLTSADAIYGVDEDALRPEDFFDPDADRDGDDE</sequence>
<reference key="1">
    <citation type="journal article" date="2009" name="J. Bacteriol.">
        <title>Genome sequences of three Agrobacterium biovars help elucidate the evolution of multichromosome genomes in bacteria.</title>
        <authorList>
            <person name="Slater S.C."/>
            <person name="Goldman B.S."/>
            <person name="Goodner B."/>
            <person name="Setubal J.C."/>
            <person name="Farrand S.K."/>
            <person name="Nester E.W."/>
            <person name="Burr T.J."/>
            <person name="Banta L."/>
            <person name="Dickerman A.W."/>
            <person name="Paulsen I."/>
            <person name="Otten L."/>
            <person name="Suen G."/>
            <person name="Welch R."/>
            <person name="Almeida N.F."/>
            <person name="Arnold F."/>
            <person name="Burton O.T."/>
            <person name="Du Z."/>
            <person name="Ewing A."/>
            <person name="Godsy E."/>
            <person name="Heisel S."/>
            <person name="Houmiel K.L."/>
            <person name="Jhaveri J."/>
            <person name="Lu J."/>
            <person name="Miller N.M."/>
            <person name="Norton S."/>
            <person name="Chen Q."/>
            <person name="Phoolcharoen W."/>
            <person name="Ohlin V."/>
            <person name="Ondrusek D."/>
            <person name="Pride N."/>
            <person name="Stricklin S.L."/>
            <person name="Sun J."/>
            <person name="Wheeler C."/>
            <person name="Wilson L."/>
            <person name="Zhu H."/>
            <person name="Wood D.W."/>
        </authorList>
    </citation>
    <scope>NUCLEOTIDE SEQUENCE [LARGE SCALE GENOMIC DNA]</scope>
    <source>
        <strain>ATCC BAA-846 / DSM 112012 / S4</strain>
    </source>
</reference>
<comment type="function">
    <text evidence="1">Binds to the 23S rRNA.</text>
</comment>
<comment type="similarity">
    <text evidence="1">Belongs to the bacterial ribosomal protein bL9 family.</text>
</comment>
<dbReference type="EMBL" id="CP000633">
    <property type="protein sequence ID" value="ACM36084.1"/>
    <property type="molecule type" value="Genomic_DNA"/>
</dbReference>
<dbReference type="RefSeq" id="WP_015915508.1">
    <property type="nucleotide sequence ID" value="NC_011989.1"/>
</dbReference>
<dbReference type="SMR" id="B9JUT9"/>
<dbReference type="STRING" id="311402.Avi_1516"/>
<dbReference type="KEGG" id="avi:Avi_1516"/>
<dbReference type="eggNOG" id="COG0359">
    <property type="taxonomic scope" value="Bacteria"/>
</dbReference>
<dbReference type="HOGENOM" id="CLU_078938_1_0_5"/>
<dbReference type="Proteomes" id="UP000001596">
    <property type="component" value="Chromosome 1"/>
</dbReference>
<dbReference type="GO" id="GO:1990904">
    <property type="term" value="C:ribonucleoprotein complex"/>
    <property type="evidence" value="ECO:0007669"/>
    <property type="project" value="UniProtKB-KW"/>
</dbReference>
<dbReference type="GO" id="GO:0005840">
    <property type="term" value="C:ribosome"/>
    <property type="evidence" value="ECO:0007669"/>
    <property type="project" value="UniProtKB-KW"/>
</dbReference>
<dbReference type="GO" id="GO:0019843">
    <property type="term" value="F:rRNA binding"/>
    <property type="evidence" value="ECO:0007669"/>
    <property type="project" value="UniProtKB-UniRule"/>
</dbReference>
<dbReference type="GO" id="GO:0003735">
    <property type="term" value="F:structural constituent of ribosome"/>
    <property type="evidence" value="ECO:0007669"/>
    <property type="project" value="InterPro"/>
</dbReference>
<dbReference type="GO" id="GO:0006412">
    <property type="term" value="P:translation"/>
    <property type="evidence" value="ECO:0007669"/>
    <property type="project" value="UniProtKB-UniRule"/>
</dbReference>
<dbReference type="Gene3D" id="3.10.430.100">
    <property type="entry name" value="Ribosomal protein L9, C-terminal domain"/>
    <property type="match status" value="1"/>
</dbReference>
<dbReference type="Gene3D" id="3.40.5.10">
    <property type="entry name" value="Ribosomal protein L9, N-terminal domain"/>
    <property type="match status" value="1"/>
</dbReference>
<dbReference type="HAMAP" id="MF_00503">
    <property type="entry name" value="Ribosomal_bL9"/>
    <property type="match status" value="1"/>
</dbReference>
<dbReference type="InterPro" id="IPR000244">
    <property type="entry name" value="Ribosomal_bL9"/>
</dbReference>
<dbReference type="InterPro" id="IPR009027">
    <property type="entry name" value="Ribosomal_bL9/RNase_H1_N"/>
</dbReference>
<dbReference type="InterPro" id="IPR020594">
    <property type="entry name" value="Ribosomal_bL9_bac/chp"/>
</dbReference>
<dbReference type="InterPro" id="IPR020069">
    <property type="entry name" value="Ribosomal_bL9_C"/>
</dbReference>
<dbReference type="InterPro" id="IPR036791">
    <property type="entry name" value="Ribosomal_bL9_C_sf"/>
</dbReference>
<dbReference type="InterPro" id="IPR020070">
    <property type="entry name" value="Ribosomal_bL9_N"/>
</dbReference>
<dbReference type="InterPro" id="IPR036935">
    <property type="entry name" value="Ribosomal_bL9_N_sf"/>
</dbReference>
<dbReference type="NCBIfam" id="TIGR00158">
    <property type="entry name" value="L9"/>
    <property type="match status" value="1"/>
</dbReference>
<dbReference type="PANTHER" id="PTHR21368">
    <property type="entry name" value="50S RIBOSOMAL PROTEIN L9"/>
    <property type="match status" value="1"/>
</dbReference>
<dbReference type="Pfam" id="PF03948">
    <property type="entry name" value="Ribosomal_L9_C"/>
    <property type="match status" value="1"/>
</dbReference>
<dbReference type="Pfam" id="PF01281">
    <property type="entry name" value="Ribosomal_L9_N"/>
    <property type="match status" value="1"/>
</dbReference>
<dbReference type="SUPFAM" id="SSF55658">
    <property type="entry name" value="L9 N-domain-like"/>
    <property type="match status" value="1"/>
</dbReference>
<dbReference type="SUPFAM" id="SSF55653">
    <property type="entry name" value="Ribosomal protein L9 C-domain"/>
    <property type="match status" value="1"/>
</dbReference>
<dbReference type="PROSITE" id="PS00651">
    <property type="entry name" value="RIBOSOMAL_L9"/>
    <property type="match status" value="1"/>
</dbReference>
<feature type="chain" id="PRO_1000196216" description="Large ribosomal subunit protein bL9">
    <location>
        <begin position="1"/>
        <end position="191"/>
    </location>
</feature>
<feature type="region of interest" description="Disordered" evidence="2">
    <location>
        <begin position="150"/>
        <end position="191"/>
    </location>
</feature>
<feature type="compositionally biased region" description="Acidic residues" evidence="2">
    <location>
        <begin position="179"/>
        <end position="191"/>
    </location>
</feature>